<reference key="1">
    <citation type="submission" date="2007-08" db="EMBL/GenBank/DDBJ databases">
        <authorList>
            <consortium name="The Citrobacter koseri Genome Sequencing Project"/>
            <person name="McClelland M."/>
            <person name="Sanderson E.K."/>
            <person name="Porwollik S."/>
            <person name="Spieth J."/>
            <person name="Clifton W.S."/>
            <person name="Latreille P."/>
            <person name="Courtney L."/>
            <person name="Wang C."/>
            <person name="Pepin K."/>
            <person name="Bhonagiri V."/>
            <person name="Nash W."/>
            <person name="Johnson M."/>
            <person name="Thiruvilangam P."/>
            <person name="Wilson R."/>
        </authorList>
    </citation>
    <scope>NUCLEOTIDE SEQUENCE [LARGE SCALE GENOMIC DNA]</scope>
    <source>
        <strain>ATCC BAA-895 / CDC 4225-83 / SGSC4696</strain>
    </source>
</reference>
<dbReference type="EC" id="5.3.1.14" evidence="1"/>
<dbReference type="EMBL" id="CP000822">
    <property type="protein sequence ID" value="ABV14193.1"/>
    <property type="molecule type" value="Genomic_DNA"/>
</dbReference>
<dbReference type="RefSeq" id="WP_012133900.1">
    <property type="nucleotide sequence ID" value="NC_009792.1"/>
</dbReference>
<dbReference type="SMR" id="A8AL30"/>
<dbReference type="STRING" id="290338.CKO_03102"/>
<dbReference type="GeneID" id="45136898"/>
<dbReference type="KEGG" id="cko:CKO_03102"/>
<dbReference type="HOGENOM" id="CLU_052790_0_0_6"/>
<dbReference type="OrthoDB" id="9766697at2"/>
<dbReference type="UniPathway" id="UPA00541">
    <property type="reaction ID" value="UER00601"/>
</dbReference>
<dbReference type="Proteomes" id="UP000008148">
    <property type="component" value="Chromosome"/>
</dbReference>
<dbReference type="GO" id="GO:0005737">
    <property type="term" value="C:cytoplasm"/>
    <property type="evidence" value="ECO:0007669"/>
    <property type="project" value="UniProtKB-SubCell"/>
</dbReference>
<dbReference type="GO" id="GO:0008740">
    <property type="term" value="F:L-rhamnose isomerase activity"/>
    <property type="evidence" value="ECO:0007669"/>
    <property type="project" value="UniProtKB-UniRule"/>
</dbReference>
<dbReference type="GO" id="GO:0030145">
    <property type="term" value="F:manganese ion binding"/>
    <property type="evidence" value="ECO:0007669"/>
    <property type="project" value="UniProtKB-UniRule"/>
</dbReference>
<dbReference type="GO" id="GO:0019324">
    <property type="term" value="P:L-lyxose metabolic process"/>
    <property type="evidence" value="ECO:0007669"/>
    <property type="project" value="TreeGrafter"/>
</dbReference>
<dbReference type="GO" id="GO:0019301">
    <property type="term" value="P:rhamnose catabolic process"/>
    <property type="evidence" value="ECO:0007669"/>
    <property type="project" value="UniProtKB-UniRule"/>
</dbReference>
<dbReference type="FunFam" id="3.20.20.150:FF:000006">
    <property type="entry name" value="L-rhamnose isomerase"/>
    <property type="match status" value="1"/>
</dbReference>
<dbReference type="Gene3D" id="3.20.20.150">
    <property type="entry name" value="Divalent-metal-dependent TIM barrel enzymes"/>
    <property type="match status" value="1"/>
</dbReference>
<dbReference type="HAMAP" id="MF_00541">
    <property type="entry name" value="RhaA"/>
    <property type="match status" value="1"/>
</dbReference>
<dbReference type="InterPro" id="IPR050337">
    <property type="entry name" value="L-rhamnose_isomerase"/>
</dbReference>
<dbReference type="InterPro" id="IPR009308">
    <property type="entry name" value="Rhamnose_isomerase"/>
</dbReference>
<dbReference type="InterPro" id="IPR036237">
    <property type="entry name" value="Xyl_isomerase-like_sf"/>
</dbReference>
<dbReference type="NCBIfam" id="NF002203">
    <property type="entry name" value="PRK01076.1"/>
    <property type="match status" value="1"/>
</dbReference>
<dbReference type="NCBIfam" id="TIGR01748">
    <property type="entry name" value="rhaA"/>
    <property type="match status" value="1"/>
</dbReference>
<dbReference type="PANTHER" id="PTHR30268">
    <property type="entry name" value="L-RHAMNOSE ISOMERASE"/>
    <property type="match status" value="1"/>
</dbReference>
<dbReference type="PANTHER" id="PTHR30268:SF0">
    <property type="entry name" value="L-RHAMNOSE ISOMERASE"/>
    <property type="match status" value="1"/>
</dbReference>
<dbReference type="Pfam" id="PF06134">
    <property type="entry name" value="RhaA"/>
    <property type="match status" value="1"/>
</dbReference>
<dbReference type="SUPFAM" id="SSF51658">
    <property type="entry name" value="Xylose isomerase-like"/>
    <property type="match status" value="1"/>
</dbReference>
<feature type="chain" id="PRO_1000017715" description="L-rhamnose isomerase">
    <location>
        <begin position="1"/>
        <end position="419"/>
    </location>
</feature>
<feature type="binding site" evidence="1">
    <location>
        <position position="262"/>
    </location>
    <ligand>
        <name>Mn(2+)</name>
        <dbReference type="ChEBI" id="CHEBI:29035"/>
    </ligand>
</feature>
<feature type="binding site" evidence="1">
    <location>
        <position position="294"/>
    </location>
    <ligand>
        <name>Mn(2+)</name>
        <dbReference type="ChEBI" id="CHEBI:29035"/>
    </ligand>
</feature>
<feature type="binding site" evidence="1">
    <location>
        <position position="296"/>
    </location>
    <ligand>
        <name>Mn(2+)</name>
        <dbReference type="ChEBI" id="CHEBI:29035"/>
    </ligand>
</feature>
<protein>
    <recommendedName>
        <fullName evidence="1">L-rhamnose isomerase</fullName>
        <ecNumber evidence="1">5.3.1.14</ecNumber>
    </recommendedName>
</protein>
<accession>A8AL30</accession>
<gene>
    <name evidence="1" type="primary">rhaA</name>
    <name type="ordered locus">CKO_03102</name>
</gene>
<evidence type="ECO:0000255" key="1">
    <source>
        <dbReference type="HAMAP-Rule" id="MF_00541"/>
    </source>
</evidence>
<proteinExistence type="inferred from homology"/>
<comment type="function">
    <text evidence="1">Catalyzes the interconversion of L-rhamnose and L-rhamnulose.</text>
</comment>
<comment type="catalytic activity">
    <reaction evidence="1">
        <text>L-rhamnopyranose = L-rhamnulose</text>
        <dbReference type="Rhea" id="RHEA:23160"/>
        <dbReference type="ChEBI" id="CHEBI:17897"/>
        <dbReference type="ChEBI" id="CHEBI:62346"/>
        <dbReference type="EC" id="5.3.1.14"/>
    </reaction>
</comment>
<comment type="cofactor">
    <cofactor evidence="1">
        <name>Mn(2+)</name>
        <dbReference type="ChEBI" id="CHEBI:29035"/>
    </cofactor>
    <text evidence="1">Binds 1 Mn(2+) ion per subunit.</text>
</comment>
<comment type="pathway">
    <text evidence="1">Carbohydrate degradation; L-rhamnose degradation; glycerone phosphate from L-rhamnose: step 1/3.</text>
</comment>
<comment type="subunit">
    <text evidence="1">Homotetramer.</text>
</comment>
<comment type="subcellular location">
    <subcellularLocation>
        <location evidence="1">Cytoplasm</location>
    </subcellularLocation>
</comment>
<comment type="similarity">
    <text evidence="1">Belongs to the rhamnose isomerase family.</text>
</comment>
<name>RHAA_CITK8</name>
<organism>
    <name type="scientific">Citrobacter koseri (strain ATCC BAA-895 / CDC 4225-83 / SGSC4696)</name>
    <dbReference type="NCBI Taxonomy" id="290338"/>
    <lineage>
        <taxon>Bacteria</taxon>
        <taxon>Pseudomonadati</taxon>
        <taxon>Pseudomonadota</taxon>
        <taxon>Gammaproteobacteria</taxon>
        <taxon>Enterobacterales</taxon>
        <taxon>Enterobacteriaceae</taxon>
        <taxon>Citrobacter</taxon>
    </lineage>
</organism>
<sequence length="419" mass="47153">MTTQLEQAWELAKQRFAAVGIDVEEALRQLDRLPVSMHCWQGDDVAGFENPEGSLTGGIQATGNYPGKARSASELRADLEQALSLIPGPKRLNLHAIYLESDTPVSRDQIKPEHFKNWVEWAKANQLGLDFNPSCFSHPLSADGFTLAHADDNIRQFWIDHCKASRRVSAYFGEQLGTPSVMNIWVPDGMKDITVDRLAPRQRLLEALDEVISEKLNPAHHIDAVESKLFGIGAESYTVGSNEFYMGYATSRQTALCLDAGHFHPTEVISDKISAAMLYVPRLLLHVSRPVRWDSDHVVLLDDETQAIASEIVRHNLFDRVHIGLDFFDASINRIAAWVIGTRNMKKALLRALLEPTGQLRQLEASGDYTARLALLEEQKSLPWQAVWEMYCQRHDTPAGSQWLESVRAYEKEILSKRS</sequence>
<keyword id="KW-0963">Cytoplasm</keyword>
<keyword id="KW-0413">Isomerase</keyword>
<keyword id="KW-0464">Manganese</keyword>
<keyword id="KW-0479">Metal-binding</keyword>
<keyword id="KW-1185">Reference proteome</keyword>
<keyword id="KW-0684">Rhamnose metabolism</keyword>